<sequence>MALIESGGVIIKAQDYKENDKLLWIFTEKMGKITAIAKGAKKSKSKLFSLTHPLCYGDYLLFKGKGLYRLSEGKIRTSFQTSLTDLEKLTYASYLCELIDISLQDEEENFNLYKEFITCLYLINTEAISYELLIRAFELKLLKYTGYGLRFDNCVFCKNKLSVSNYISLRYFGGVCDKCPKEHGLYINKATYNALRFLNNTSLDKVYRLTLTEEVKAELFKVTSFIISSVYSRKPKSLEMLKFIKE</sequence>
<gene>
    <name type="primary">recO</name>
    <name type="ordered locus">CPE2014</name>
</gene>
<comment type="function">
    <text evidence="1">Involved in DNA repair and RecF pathway recombination.</text>
</comment>
<comment type="similarity">
    <text evidence="2">Belongs to the RecO family.</text>
</comment>
<comment type="sequence caution" evidence="2">
    <conflict type="erroneous initiation">
        <sequence resource="EMBL-CDS" id="BAB81720"/>
    </conflict>
</comment>
<protein>
    <recommendedName>
        <fullName>DNA repair protein RecO</fullName>
    </recommendedName>
    <alternativeName>
        <fullName>Recombination protein O</fullName>
    </alternativeName>
</protein>
<organism>
    <name type="scientific">Clostridium perfringens (strain 13 / Type A)</name>
    <dbReference type="NCBI Taxonomy" id="195102"/>
    <lineage>
        <taxon>Bacteria</taxon>
        <taxon>Bacillati</taxon>
        <taxon>Bacillota</taxon>
        <taxon>Clostridia</taxon>
        <taxon>Eubacteriales</taxon>
        <taxon>Clostridiaceae</taxon>
        <taxon>Clostridium</taxon>
    </lineage>
</organism>
<feature type="chain" id="PRO_0000204947" description="DNA repair protein RecO">
    <location>
        <begin position="1"/>
        <end position="246"/>
    </location>
</feature>
<proteinExistence type="inferred from homology"/>
<reference key="1">
    <citation type="journal article" date="2002" name="Proc. Natl. Acad. Sci. U.S.A.">
        <title>Complete genome sequence of Clostridium perfringens, an anaerobic flesh-eater.</title>
        <authorList>
            <person name="Shimizu T."/>
            <person name="Ohtani K."/>
            <person name="Hirakawa H."/>
            <person name="Ohshima K."/>
            <person name="Yamashita A."/>
            <person name="Shiba T."/>
            <person name="Ogasawara N."/>
            <person name="Hattori M."/>
            <person name="Kuhara S."/>
            <person name="Hayashi H."/>
        </authorList>
    </citation>
    <scope>NUCLEOTIDE SEQUENCE [LARGE SCALE GENOMIC DNA]</scope>
    <source>
        <strain>13 / Type A</strain>
    </source>
</reference>
<name>RECO_CLOPE</name>
<accession>Q8XIU9</accession>
<dbReference type="EMBL" id="BA000016">
    <property type="protein sequence ID" value="BAB81720.1"/>
    <property type="status" value="ALT_INIT"/>
    <property type="molecule type" value="Genomic_DNA"/>
</dbReference>
<dbReference type="SMR" id="Q8XIU9"/>
<dbReference type="STRING" id="195102.gene:10491284"/>
<dbReference type="KEGG" id="cpe:CPE2014"/>
<dbReference type="HOGENOM" id="CLU_066632_3_1_9"/>
<dbReference type="Proteomes" id="UP000000818">
    <property type="component" value="Chromosome"/>
</dbReference>
<dbReference type="GO" id="GO:0043590">
    <property type="term" value="C:bacterial nucleoid"/>
    <property type="evidence" value="ECO:0007669"/>
    <property type="project" value="TreeGrafter"/>
</dbReference>
<dbReference type="GO" id="GO:0006310">
    <property type="term" value="P:DNA recombination"/>
    <property type="evidence" value="ECO:0007669"/>
    <property type="project" value="UniProtKB-UniRule"/>
</dbReference>
<dbReference type="GO" id="GO:0006302">
    <property type="term" value="P:double-strand break repair"/>
    <property type="evidence" value="ECO:0007669"/>
    <property type="project" value="TreeGrafter"/>
</dbReference>
<dbReference type="Gene3D" id="2.40.50.140">
    <property type="entry name" value="Nucleic acid-binding proteins"/>
    <property type="match status" value="1"/>
</dbReference>
<dbReference type="Gene3D" id="1.20.1440.120">
    <property type="entry name" value="Recombination protein O, C-terminal domain"/>
    <property type="match status" value="1"/>
</dbReference>
<dbReference type="HAMAP" id="MF_00201">
    <property type="entry name" value="RecO"/>
    <property type="match status" value="1"/>
</dbReference>
<dbReference type="InterPro" id="IPR037278">
    <property type="entry name" value="ARFGAP/RecO"/>
</dbReference>
<dbReference type="InterPro" id="IPR022572">
    <property type="entry name" value="DNA_rep/recomb_RecO_N"/>
</dbReference>
<dbReference type="InterPro" id="IPR012340">
    <property type="entry name" value="NA-bd_OB-fold"/>
</dbReference>
<dbReference type="InterPro" id="IPR003717">
    <property type="entry name" value="RecO"/>
</dbReference>
<dbReference type="InterPro" id="IPR042242">
    <property type="entry name" value="RecO_C"/>
</dbReference>
<dbReference type="NCBIfam" id="TIGR00613">
    <property type="entry name" value="reco"/>
    <property type="match status" value="1"/>
</dbReference>
<dbReference type="PANTHER" id="PTHR33991">
    <property type="entry name" value="DNA REPAIR PROTEIN RECO"/>
    <property type="match status" value="1"/>
</dbReference>
<dbReference type="PANTHER" id="PTHR33991:SF1">
    <property type="entry name" value="DNA REPAIR PROTEIN RECO"/>
    <property type="match status" value="1"/>
</dbReference>
<dbReference type="Pfam" id="PF02565">
    <property type="entry name" value="RecO_C"/>
    <property type="match status" value="1"/>
</dbReference>
<dbReference type="Pfam" id="PF11967">
    <property type="entry name" value="RecO_N"/>
    <property type="match status" value="1"/>
</dbReference>
<dbReference type="SUPFAM" id="SSF57863">
    <property type="entry name" value="ArfGap/RecO-like zinc finger"/>
    <property type="match status" value="1"/>
</dbReference>
<dbReference type="SUPFAM" id="SSF50249">
    <property type="entry name" value="Nucleic acid-binding proteins"/>
    <property type="match status" value="1"/>
</dbReference>
<evidence type="ECO:0000250" key="1"/>
<evidence type="ECO:0000305" key="2"/>
<keyword id="KW-0227">DNA damage</keyword>
<keyword id="KW-0233">DNA recombination</keyword>
<keyword id="KW-0234">DNA repair</keyword>
<keyword id="KW-1185">Reference proteome</keyword>